<name>FEN_PICTO</name>
<gene>
    <name evidence="2" type="primary">fen</name>
    <name type="ordered locus">PTO0228</name>
</gene>
<accession>Q6L2I9</accession>
<organism>
    <name type="scientific">Picrophilus torridus (strain ATCC 700027 / DSM 9790 / JCM 10055 / NBRC 100828 / KAW 2/3)</name>
    <dbReference type="NCBI Taxonomy" id="1122961"/>
    <lineage>
        <taxon>Archaea</taxon>
        <taxon>Methanobacteriati</taxon>
        <taxon>Thermoplasmatota</taxon>
        <taxon>Thermoplasmata</taxon>
        <taxon>Thermoplasmatales</taxon>
        <taxon>Picrophilaceae</taxon>
        <taxon>Picrophilus</taxon>
    </lineage>
</organism>
<proteinExistence type="inferred from homology"/>
<keyword id="KW-0227">DNA damage</keyword>
<keyword id="KW-0234">DNA repair</keyword>
<keyword id="KW-0235">DNA replication</keyword>
<keyword id="KW-0255">Endonuclease</keyword>
<keyword id="KW-0269">Exonuclease</keyword>
<keyword id="KW-0378">Hydrolase</keyword>
<keyword id="KW-0460">Magnesium</keyword>
<keyword id="KW-0479">Metal-binding</keyword>
<keyword id="KW-0540">Nuclease</keyword>
<feature type="chain" id="PRO_0000154058" description="Flap endonuclease 1">
    <location>
        <begin position="1"/>
        <end position="338"/>
    </location>
</feature>
<feature type="region of interest" description="N-domain">
    <location>
        <begin position="1"/>
        <end position="98"/>
    </location>
</feature>
<feature type="region of interest" description="I-domain">
    <location>
        <begin position="116"/>
        <end position="257"/>
    </location>
</feature>
<feature type="region of interest" description="Interaction with PCNA" evidence="2">
    <location>
        <begin position="330"/>
        <end position="338"/>
    </location>
</feature>
<feature type="binding site" evidence="2">
    <location>
        <position position="27"/>
    </location>
    <ligand>
        <name>Mg(2+)</name>
        <dbReference type="ChEBI" id="CHEBI:18420"/>
        <label>1</label>
    </ligand>
</feature>
<feature type="binding site" evidence="2">
    <location>
        <position position="80"/>
    </location>
    <ligand>
        <name>Mg(2+)</name>
        <dbReference type="ChEBI" id="CHEBI:18420"/>
        <label>1</label>
    </ligand>
</feature>
<feature type="binding site" evidence="2">
    <location>
        <position position="152"/>
    </location>
    <ligand>
        <name>Mg(2+)</name>
        <dbReference type="ChEBI" id="CHEBI:18420"/>
        <label>1</label>
    </ligand>
</feature>
<feature type="binding site" evidence="2">
    <location>
        <position position="154"/>
    </location>
    <ligand>
        <name>Mg(2+)</name>
        <dbReference type="ChEBI" id="CHEBI:18420"/>
        <label>1</label>
    </ligand>
</feature>
<feature type="binding site" evidence="2">
    <location>
        <position position="173"/>
    </location>
    <ligand>
        <name>Mg(2+)</name>
        <dbReference type="ChEBI" id="CHEBI:18420"/>
        <label>2</label>
    </ligand>
</feature>
<feature type="binding site" evidence="2">
    <location>
        <position position="175"/>
    </location>
    <ligand>
        <name>Mg(2+)</name>
        <dbReference type="ChEBI" id="CHEBI:18420"/>
        <label>2</label>
    </ligand>
</feature>
<feature type="binding site" evidence="2">
    <location>
        <position position="236"/>
    </location>
    <ligand>
        <name>Mg(2+)</name>
        <dbReference type="ChEBI" id="CHEBI:18420"/>
        <label>2</label>
    </ligand>
</feature>
<dbReference type="EC" id="3.1.-.-" evidence="2"/>
<dbReference type="EMBL" id="AE017261">
    <property type="protein sequence ID" value="AAT42813.1"/>
    <property type="molecule type" value="Genomic_DNA"/>
</dbReference>
<dbReference type="RefSeq" id="WP_011177029.1">
    <property type="nucleotide sequence ID" value="NC_005877.1"/>
</dbReference>
<dbReference type="SMR" id="Q6L2I9"/>
<dbReference type="FunCoup" id="Q6L2I9">
    <property type="interactions" value="153"/>
</dbReference>
<dbReference type="STRING" id="263820.PTO0228"/>
<dbReference type="PaxDb" id="263820-PTO0228"/>
<dbReference type="GeneID" id="2844245"/>
<dbReference type="KEGG" id="pto:PTO0228"/>
<dbReference type="PATRIC" id="fig|263820.9.peg.246"/>
<dbReference type="eggNOG" id="arCOG04050">
    <property type="taxonomic scope" value="Archaea"/>
</dbReference>
<dbReference type="HOGENOM" id="CLU_032444_0_0_2"/>
<dbReference type="InParanoid" id="Q6L2I9"/>
<dbReference type="OrthoDB" id="9593at2157"/>
<dbReference type="Proteomes" id="UP000000438">
    <property type="component" value="Chromosome"/>
</dbReference>
<dbReference type="GO" id="GO:0008409">
    <property type="term" value="F:5'-3' exonuclease activity"/>
    <property type="evidence" value="ECO:0007669"/>
    <property type="project" value="UniProtKB-UniRule"/>
</dbReference>
<dbReference type="GO" id="GO:0017108">
    <property type="term" value="F:5'-flap endonuclease activity"/>
    <property type="evidence" value="ECO:0007669"/>
    <property type="project" value="UniProtKB-UniRule"/>
</dbReference>
<dbReference type="GO" id="GO:0003677">
    <property type="term" value="F:DNA binding"/>
    <property type="evidence" value="ECO:0007669"/>
    <property type="project" value="UniProtKB-UniRule"/>
</dbReference>
<dbReference type="GO" id="GO:0000287">
    <property type="term" value="F:magnesium ion binding"/>
    <property type="evidence" value="ECO:0007669"/>
    <property type="project" value="UniProtKB-UniRule"/>
</dbReference>
<dbReference type="GO" id="GO:0006281">
    <property type="term" value="P:DNA repair"/>
    <property type="evidence" value="ECO:0007669"/>
    <property type="project" value="UniProtKB-UniRule"/>
</dbReference>
<dbReference type="GO" id="GO:0043137">
    <property type="term" value="P:DNA replication, removal of RNA primer"/>
    <property type="evidence" value="ECO:0007669"/>
    <property type="project" value="UniProtKB-UniRule"/>
</dbReference>
<dbReference type="CDD" id="cd09903">
    <property type="entry name" value="H3TH_FEN1-Arc"/>
    <property type="match status" value="1"/>
</dbReference>
<dbReference type="CDD" id="cd09867">
    <property type="entry name" value="PIN_FEN1"/>
    <property type="match status" value="1"/>
</dbReference>
<dbReference type="FunFam" id="3.40.50.1010:FF:000016">
    <property type="entry name" value="Flap endonuclease 1"/>
    <property type="match status" value="1"/>
</dbReference>
<dbReference type="Gene3D" id="1.10.150.20">
    <property type="entry name" value="5' to 3' exonuclease, C-terminal subdomain"/>
    <property type="match status" value="1"/>
</dbReference>
<dbReference type="Gene3D" id="3.40.50.1010">
    <property type="entry name" value="5'-nuclease"/>
    <property type="match status" value="1"/>
</dbReference>
<dbReference type="HAMAP" id="MF_00614">
    <property type="entry name" value="Fen"/>
    <property type="match status" value="1"/>
</dbReference>
<dbReference type="InterPro" id="IPR036279">
    <property type="entry name" value="5-3_exonuclease_C_sf"/>
</dbReference>
<dbReference type="InterPro" id="IPR023426">
    <property type="entry name" value="Flap_endonuc"/>
</dbReference>
<dbReference type="InterPro" id="IPR019973">
    <property type="entry name" value="Flap_endonuc_arc"/>
</dbReference>
<dbReference type="InterPro" id="IPR008918">
    <property type="entry name" value="HhH2"/>
</dbReference>
<dbReference type="InterPro" id="IPR029060">
    <property type="entry name" value="PIN-like_dom_sf"/>
</dbReference>
<dbReference type="InterPro" id="IPR006086">
    <property type="entry name" value="XPG-I_dom"/>
</dbReference>
<dbReference type="InterPro" id="IPR006084">
    <property type="entry name" value="XPG/Rad2"/>
</dbReference>
<dbReference type="InterPro" id="IPR019974">
    <property type="entry name" value="XPG_CS"/>
</dbReference>
<dbReference type="InterPro" id="IPR006085">
    <property type="entry name" value="XPG_DNA_repair_N"/>
</dbReference>
<dbReference type="NCBIfam" id="TIGR03674">
    <property type="entry name" value="fen_arch"/>
    <property type="match status" value="1"/>
</dbReference>
<dbReference type="PANTHER" id="PTHR11081:SF9">
    <property type="entry name" value="FLAP ENDONUCLEASE 1"/>
    <property type="match status" value="1"/>
</dbReference>
<dbReference type="PANTHER" id="PTHR11081">
    <property type="entry name" value="FLAP ENDONUCLEASE FAMILY MEMBER"/>
    <property type="match status" value="1"/>
</dbReference>
<dbReference type="Pfam" id="PF00867">
    <property type="entry name" value="XPG_I"/>
    <property type="match status" value="1"/>
</dbReference>
<dbReference type="Pfam" id="PF00752">
    <property type="entry name" value="XPG_N"/>
    <property type="match status" value="1"/>
</dbReference>
<dbReference type="PRINTS" id="PR00853">
    <property type="entry name" value="XPGRADSUPER"/>
</dbReference>
<dbReference type="SMART" id="SM00279">
    <property type="entry name" value="HhH2"/>
    <property type="match status" value="1"/>
</dbReference>
<dbReference type="SMART" id="SM00484">
    <property type="entry name" value="XPGI"/>
    <property type="match status" value="1"/>
</dbReference>
<dbReference type="SMART" id="SM00485">
    <property type="entry name" value="XPGN"/>
    <property type="match status" value="1"/>
</dbReference>
<dbReference type="SUPFAM" id="SSF47807">
    <property type="entry name" value="5' to 3' exonuclease, C-terminal subdomain"/>
    <property type="match status" value="1"/>
</dbReference>
<dbReference type="SUPFAM" id="SSF88723">
    <property type="entry name" value="PIN domain-like"/>
    <property type="match status" value="1"/>
</dbReference>
<dbReference type="PROSITE" id="PS00841">
    <property type="entry name" value="XPG_1"/>
    <property type="match status" value="1"/>
</dbReference>
<reference key="1">
    <citation type="journal article" date="2004" name="Proc. Natl. Acad. Sci. U.S.A.">
        <title>Genome sequence of Picrophilus torridus and its implications for life around pH 0.</title>
        <authorList>
            <person name="Fuetterer O."/>
            <person name="Angelov A."/>
            <person name="Liesegang H."/>
            <person name="Gottschalk G."/>
            <person name="Schleper C."/>
            <person name="Schepers B."/>
            <person name="Dock C."/>
            <person name="Antranikian G."/>
            <person name="Liebl W."/>
        </authorList>
    </citation>
    <scope>NUCLEOTIDE SEQUENCE [LARGE SCALE GENOMIC DNA]</scope>
    <source>
        <strain>ATCC 700027 / DSM 9790 / JCM 10055 / NBRC 100828 / KAW 2/3</strain>
    </source>
</reference>
<evidence type="ECO:0000250" key="1"/>
<evidence type="ECO:0000255" key="2">
    <source>
        <dbReference type="HAMAP-Rule" id="MF_00614"/>
    </source>
</evidence>
<comment type="function">
    <text evidence="1">Structure-specific nuclease with 5'-flap endonuclease and 5'-3' exonuclease activities involved in DNA replication and repair. During DNA replication, cleaves the 5'-overhanging flap structure that is generated by displacement synthesis when DNA polymerase encounters the 5'-end of a downstream Okazaki fragment. Binds the unpaired 3'-DNA end and kinks the DNA to facilitate 5' cleavage specificity. Cleaves one nucleotide into the double-stranded DNA from the junction in flap DNA, leaving a nick for ligation. Also involved in the base excision repair (BER) pathway. Acts as a genome stabilization factor that prevents flaps from equilibrating into structures that lead to duplications and deletions. Also possesses 5'-3' exonuclease activity on nicked or gapped double-stranded DNA (By similarity).</text>
</comment>
<comment type="cofactor">
    <cofactor evidence="2">
        <name>Mg(2+)</name>
        <dbReference type="ChEBI" id="CHEBI:18420"/>
    </cofactor>
    <text evidence="2">Binds 2 magnesium ions per subunit. They probably participate in the reaction catalyzed by the enzyme. May bind an additional third magnesium ion after substrate binding.</text>
</comment>
<comment type="subunit">
    <text evidence="2">Interacts with PCNA. PCNA stimulates the nuclease activity without altering cleavage specificity.</text>
</comment>
<comment type="similarity">
    <text evidence="2">Belongs to the XPG/RAD2 endonuclease family. FEN1 subfamily.</text>
</comment>
<protein>
    <recommendedName>
        <fullName evidence="2">Flap endonuclease 1</fullName>
        <shortName evidence="2">FEN-1</shortName>
        <ecNumber evidence="2">3.1.-.-</ecNumber>
    </recommendedName>
    <alternativeName>
        <fullName evidence="2">Flap structure-specific endonuclease 1</fullName>
    </alternativeName>
</protein>
<sequence>MGVNLSSILIKHETSLKDNSGSIVSVDAYNIIYQFLSSIRGDDGEPLKDSNGNITSHLSGIFYRTSNLLENNIKPVYVFDGKPFHLKSETLRERSLIKEKNIMKLEEAIASNDDAKIRSLSSRINYITDDIVNESKTLLNLMGLPYVQAPSEGEAQASYMTLKGDVNAVVSQDYDCLLFGAKRILRNFTVYGRRRIAGTSRTINVNPEIIDLNENLSNLGISREQLIYIGILTGTDFNPGVKGIGAKTALSLIKKYNDIYSVIKIKNIGIDNLDEIIEFFMNPPHNDYEIKFNEPDFDGIIDFLCGKHNFSESRVNETLEKISRNYKKDHQSSLDRFF</sequence>